<sequence>MSEQTQQQNSEEAVENVEAVETVETVGNADGVQEQAAAEPAYEDLQARIAELEAQLKDEQLRALANEQNLRRRHQQEIADTHKFAGQKFAVEMLPVKDYLEMALLDQSGNFDALKMGVQMTLNELQKAFDATQIKEINPKAGDKLDPNIHQAMQAVASEQEPNTVVGVMKKGYTLSDRVLRPAMVTVARKEA</sequence>
<evidence type="ECO:0000255" key="1">
    <source>
        <dbReference type="HAMAP-Rule" id="MF_01151"/>
    </source>
</evidence>
<dbReference type="EMBL" id="AE004969">
    <property type="protein sequence ID" value="AAW90066.1"/>
    <property type="molecule type" value="Genomic_DNA"/>
</dbReference>
<dbReference type="RefSeq" id="WP_003689277.1">
    <property type="nucleotide sequence ID" value="NC_002946.2"/>
</dbReference>
<dbReference type="RefSeq" id="YP_208478.1">
    <property type="nucleotide sequence ID" value="NC_002946.2"/>
</dbReference>
<dbReference type="SMR" id="Q5F6X1"/>
<dbReference type="STRING" id="242231.NGO_1422"/>
<dbReference type="KEGG" id="ngo:NGO_1422"/>
<dbReference type="PATRIC" id="fig|242231.10.peg.1676"/>
<dbReference type="HOGENOM" id="CLU_057217_6_2_4"/>
<dbReference type="Proteomes" id="UP000000535">
    <property type="component" value="Chromosome"/>
</dbReference>
<dbReference type="GO" id="GO:0005829">
    <property type="term" value="C:cytosol"/>
    <property type="evidence" value="ECO:0007669"/>
    <property type="project" value="TreeGrafter"/>
</dbReference>
<dbReference type="GO" id="GO:0000774">
    <property type="term" value="F:adenyl-nucleotide exchange factor activity"/>
    <property type="evidence" value="ECO:0007669"/>
    <property type="project" value="InterPro"/>
</dbReference>
<dbReference type="GO" id="GO:0042803">
    <property type="term" value="F:protein homodimerization activity"/>
    <property type="evidence" value="ECO:0007669"/>
    <property type="project" value="InterPro"/>
</dbReference>
<dbReference type="GO" id="GO:0051087">
    <property type="term" value="F:protein-folding chaperone binding"/>
    <property type="evidence" value="ECO:0007669"/>
    <property type="project" value="InterPro"/>
</dbReference>
<dbReference type="GO" id="GO:0051082">
    <property type="term" value="F:unfolded protein binding"/>
    <property type="evidence" value="ECO:0007669"/>
    <property type="project" value="TreeGrafter"/>
</dbReference>
<dbReference type="GO" id="GO:0006457">
    <property type="term" value="P:protein folding"/>
    <property type="evidence" value="ECO:0007669"/>
    <property type="project" value="InterPro"/>
</dbReference>
<dbReference type="CDD" id="cd00446">
    <property type="entry name" value="GrpE"/>
    <property type="match status" value="1"/>
</dbReference>
<dbReference type="FunFam" id="2.30.22.10:FF:000001">
    <property type="entry name" value="Protein GrpE"/>
    <property type="match status" value="1"/>
</dbReference>
<dbReference type="Gene3D" id="3.90.20.20">
    <property type="match status" value="1"/>
</dbReference>
<dbReference type="Gene3D" id="2.30.22.10">
    <property type="entry name" value="Head domain of nucleotide exchange factor GrpE"/>
    <property type="match status" value="1"/>
</dbReference>
<dbReference type="HAMAP" id="MF_01151">
    <property type="entry name" value="GrpE"/>
    <property type="match status" value="1"/>
</dbReference>
<dbReference type="InterPro" id="IPR000740">
    <property type="entry name" value="GrpE"/>
</dbReference>
<dbReference type="InterPro" id="IPR013805">
    <property type="entry name" value="GrpE_coiled_coil"/>
</dbReference>
<dbReference type="InterPro" id="IPR009012">
    <property type="entry name" value="GrpE_head"/>
</dbReference>
<dbReference type="NCBIfam" id="NF010737">
    <property type="entry name" value="PRK14139.1"/>
    <property type="match status" value="1"/>
</dbReference>
<dbReference type="NCBIfam" id="NF010738">
    <property type="entry name" value="PRK14140.1"/>
    <property type="match status" value="1"/>
</dbReference>
<dbReference type="PANTHER" id="PTHR21237">
    <property type="entry name" value="GRPE PROTEIN"/>
    <property type="match status" value="1"/>
</dbReference>
<dbReference type="PANTHER" id="PTHR21237:SF23">
    <property type="entry name" value="GRPE PROTEIN HOMOLOG, MITOCHONDRIAL"/>
    <property type="match status" value="1"/>
</dbReference>
<dbReference type="Pfam" id="PF01025">
    <property type="entry name" value="GrpE"/>
    <property type="match status" value="1"/>
</dbReference>
<dbReference type="PRINTS" id="PR00773">
    <property type="entry name" value="GRPEPROTEIN"/>
</dbReference>
<dbReference type="SUPFAM" id="SSF58014">
    <property type="entry name" value="Coiled-coil domain of nucleotide exchange factor GrpE"/>
    <property type="match status" value="1"/>
</dbReference>
<dbReference type="SUPFAM" id="SSF51064">
    <property type="entry name" value="Head domain of nucleotide exchange factor GrpE"/>
    <property type="match status" value="1"/>
</dbReference>
<dbReference type="PROSITE" id="PS01071">
    <property type="entry name" value="GRPE"/>
    <property type="match status" value="1"/>
</dbReference>
<protein>
    <recommendedName>
        <fullName evidence="1">Protein GrpE</fullName>
    </recommendedName>
    <alternativeName>
        <fullName evidence="1">HSP-70 cofactor</fullName>
    </alternativeName>
</protein>
<proteinExistence type="inferred from homology"/>
<comment type="function">
    <text evidence="1">Participates actively in the response to hyperosmotic and heat shock by preventing the aggregation of stress-denatured proteins, in association with DnaK and GrpE. It is the nucleotide exchange factor for DnaK and may function as a thermosensor. Unfolded proteins bind initially to DnaJ; upon interaction with the DnaJ-bound protein, DnaK hydrolyzes its bound ATP, resulting in the formation of a stable complex. GrpE releases ADP from DnaK; ATP binding to DnaK triggers the release of the substrate protein, thus completing the reaction cycle. Several rounds of ATP-dependent interactions between DnaJ, DnaK and GrpE are required for fully efficient folding.</text>
</comment>
<comment type="subunit">
    <text evidence="1">Homodimer.</text>
</comment>
<comment type="subcellular location">
    <subcellularLocation>
        <location evidence="1">Cytoplasm</location>
    </subcellularLocation>
</comment>
<comment type="similarity">
    <text evidence="1">Belongs to the GrpE family.</text>
</comment>
<feature type="chain" id="PRO_1000137585" description="Protein GrpE">
    <location>
        <begin position="1"/>
        <end position="192"/>
    </location>
</feature>
<gene>
    <name evidence="1" type="primary">grpE</name>
    <name type="ordered locus">NGO_1422</name>
</gene>
<reference key="1">
    <citation type="submission" date="2003-03" db="EMBL/GenBank/DDBJ databases">
        <title>The complete genome sequence of Neisseria gonorrhoeae.</title>
        <authorList>
            <person name="Lewis L.A."/>
            <person name="Gillaspy A.F."/>
            <person name="McLaughlin R.E."/>
            <person name="Gipson M."/>
            <person name="Ducey T.F."/>
            <person name="Ownbey T."/>
            <person name="Hartman K."/>
            <person name="Nydick C."/>
            <person name="Carson M.B."/>
            <person name="Vaughn J."/>
            <person name="Thomson C."/>
            <person name="Song L."/>
            <person name="Lin S."/>
            <person name="Yuan X."/>
            <person name="Najar F."/>
            <person name="Zhan M."/>
            <person name="Ren Q."/>
            <person name="Zhu H."/>
            <person name="Qi S."/>
            <person name="Kenton S.M."/>
            <person name="Lai H."/>
            <person name="White J.D."/>
            <person name="Clifton S."/>
            <person name="Roe B.A."/>
            <person name="Dyer D.W."/>
        </authorList>
    </citation>
    <scope>NUCLEOTIDE SEQUENCE [LARGE SCALE GENOMIC DNA]</scope>
    <source>
        <strain>ATCC 700825 / FA 1090</strain>
    </source>
</reference>
<organism>
    <name type="scientific">Neisseria gonorrhoeae (strain ATCC 700825 / FA 1090)</name>
    <dbReference type="NCBI Taxonomy" id="242231"/>
    <lineage>
        <taxon>Bacteria</taxon>
        <taxon>Pseudomonadati</taxon>
        <taxon>Pseudomonadota</taxon>
        <taxon>Betaproteobacteria</taxon>
        <taxon>Neisseriales</taxon>
        <taxon>Neisseriaceae</taxon>
        <taxon>Neisseria</taxon>
    </lineage>
</organism>
<keyword id="KW-0143">Chaperone</keyword>
<keyword id="KW-0963">Cytoplasm</keyword>
<keyword id="KW-1185">Reference proteome</keyword>
<keyword id="KW-0346">Stress response</keyword>
<accession>Q5F6X1</accession>
<name>GRPE_NEIG1</name>